<dbReference type="EMBL" id="CP001661">
    <property type="protein sequence ID" value="ACT19335.1"/>
    <property type="molecule type" value="Genomic_DNA"/>
</dbReference>
<dbReference type="SMR" id="C6E4N9"/>
<dbReference type="STRING" id="443144.GM21_3310"/>
<dbReference type="KEGG" id="gem:GM21_3310"/>
<dbReference type="eggNOG" id="COG1841">
    <property type="taxonomic scope" value="Bacteria"/>
</dbReference>
<dbReference type="HOGENOM" id="CLU_131047_2_1_7"/>
<dbReference type="OrthoDB" id="9812790at2"/>
<dbReference type="GO" id="GO:0022625">
    <property type="term" value="C:cytosolic large ribosomal subunit"/>
    <property type="evidence" value="ECO:0007669"/>
    <property type="project" value="TreeGrafter"/>
</dbReference>
<dbReference type="GO" id="GO:0003735">
    <property type="term" value="F:structural constituent of ribosome"/>
    <property type="evidence" value="ECO:0007669"/>
    <property type="project" value="InterPro"/>
</dbReference>
<dbReference type="GO" id="GO:0006412">
    <property type="term" value="P:translation"/>
    <property type="evidence" value="ECO:0007669"/>
    <property type="project" value="InterPro"/>
</dbReference>
<dbReference type="CDD" id="cd01658">
    <property type="entry name" value="Ribosomal_L30"/>
    <property type="match status" value="1"/>
</dbReference>
<dbReference type="Gene3D" id="3.30.1390.20">
    <property type="entry name" value="Ribosomal protein L30, ferredoxin-like fold domain"/>
    <property type="match status" value="1"/>
</dbReference>
<dbReference type="HAMAP" id="MF_01371_B">
    <property type="entry name" value="Ribosomal_uL30_B"/>
    <property type="match status" value="1"/>
</dbReference>
<dbReference type="InterPro" id="IPR036919">
    <property type="entry name" value="Ribo_uL30_ferredoxin-like_sf"/>
</dbReference>
<dbReference type="InterPro" id="IPR005996">
    <property type="entry name" value="Ribosomal_uL30_bac-type"/>
</dbReference>
<dbReference type="InterPro" id="IPR016082">
    <property type="entry name" value="Ribosomal_uL30_ferredoxin-like"/>
</dbReference>
<dbReference type="NCBIfam" id="TIGR01308">
    <property type="entry name" value="rpmD_bact"/>
    <property type="match status" value="1"/>
</dbReference>
<dbReference type="PANTHER" id="PTHR15892:SF2">
    <property type="entry name" value="LARGE RIBOSOMAL SUBUNIT PROTEIN UL30M"/>
    <property type="match status" value="1"/>
</dbReference>
<dbReference type="PANTHER" id="PTHR15892">
    <property type="entry name" value="MITOCHONDRIAL RIBOSOMAL PROTEIN L30"/>
    <property type="match status" value="1"/>
</dbReference>
<dbReference type="Pfam" id="PF00327">
    <property type="entry name" value="Ribosomal_L30"/>
    <property type="match status" value="1"/>
</dbReference>
<dbReference type="PIRSF" id="PIRSF002211">
    <property type="entry name" value="Ribosomal_L30_bac-type"/>
    <property type="match status" value="1"/>
</dbReference>
<dbReference type="SUPFAM" id="SSF55129">
    <property type="entry name" value="Ribosomal protein L30p/L7e"/>
    <property type="match status" value="1"/>
</dbReference>
<keyword id="KW-0687">Ribonucleoprotein</keyword>
<keyword id="KW-0689">Ribosomal protein</keyword>
<protein>
    <recommendedName>
        <fullName evidence="1">Large ribosomal subunit protein uL30</fullName>
    </recommendedName>
    <alternativeName>
        <fullName evidence="2">50S ribosomal protein L30</fullName>
    </alternativeName>
</protein>
<proteinExistence type="inferred from homology"/>
<gene>
    <name evidence="1" type="primary">rpmD</name>
    <name type="ordered locus">GM21_3310</name>
</gene>
<accession>C6E4N9</accession>
<name>RL30_GEOSM</name>
<reference key="1">
    <citation type="submission" date="2009-07" db="EMBL/GenBank/DDBJ databases">
        <title>Complete sequence of Geobacter sp. M21.</title>
        <authorList>
            <consortium name="US DOE Joint Genome Institute"/>
            <person name="Lucas S."/>
            <person name="Copeland A."/>
            <person name="Lapidus A."/>
            <person name="Glavina del Rio T."/>
            <person name="Dalin E."/>
            <person name="Tice H."/>
            <person name="Bruce D."/>
            <person name="Goodwin L."/>
            <person name="Pitluck S."/>
            <person name="Saunders E."/>
            <person name="Brettin T."/>
            <person name="Detter J.C."/>
            <person name="Han C."/>
            <person name="Larimer F."/>
            <person name="Land M."/>
            <person name="Hauser L."/>
            <person name="Kyrpides N."/>
            <person name="Ovchinnikova G."/>
            <person name="Lovley D."/>
        </authorList>
    </citation>
    <scope>NUCLEOTIDE SEQUENCE [LARGE SCALE GENOMIC DNA]</scope>
    <source>
        <strain>M21</strain>
    </source>
</reference>
<sequence>MSAELKITLVRSAIGQSEKMKGRLLGMGLTKREKTVTLQDTPEIRGMIAKVAHLVRVEE</sequence>
<feature type="chain" id="PRO_1000215063" description="Large ribosomal subunit protein uL30">
    <location>
        <begin position="1"/>
        <end position="59"/>
    </location>
</feature>
<organism>
    <name type="scientific">Geobacter sp. (strain M21)</name>
    <dbReference type="NCBI Taxonomy" id="443144"/>
    <lineage>
        <taxon>Bacteria</taxon>
        <taxon>Pseudomonadati</taxon>
        <taxon>Thermodesulfobacteriota</taxon>
        <taxon>Desulfuromonadia</taxon>
        <taxon>Geobacterales</taxon>
        <taxon>Geobacteraceae</taxon>
        <taxon>Geobacter</taxon>
    </lineage>
</organism>
<comment type="subunit">
    <text evidence="1">Part of the 50S ribosomal subunit.</text>
</comment>
<comment type="similarity">
    <text evidence="1">Belongs to the universal ribosomal protein uL30 family.</text>
</comment>
<evidence type="ECO:0000255" key="1">
    <source>
        <dbReference type="HAMAP-Rule" id="MF_01371"/>
    </source>
</evidence>
<evidence type="ECO:0000305" key="2"/>